<keyword id="KW-0937">Abscisic acid biosynthesis</keyword>
<keyword id="KW-0150">Chloroplast</keyword>
<keyword id="KW-0274">FAD</keyword>
<keyword id="KW-0285">Flavoprotein</keyword>
<keyword id="KW-0472">Membrane</keyword>
<keyword id="KW-0560">Oxidoreductase</keyword>
<keyword id="KW-0934">Plastid</keyword>
<keyword id="KW-1185">Reference proteome</keyword>
<keyword id="KW-0793">Thylakoid</keyword>
<keyword id="KW-0809">Transit peptide</keyword>
<name>ABA2_SPIOL</name>
<comment type="function">
    <text evidence="4">Converts zeaxanthin into antheraxanthin and subsequently violaxanthin. Involved in the epoxidation of zeaxanthin.</text>
</comment>
<comment type="catalytic activity">
    <reaction evidence="4">
        <text>all-trans-zeaxanthin + 4 reduced [2Fe-2S]-[ferredoxin] + 2 O2 + 4 H(+) = all-trans-violaxanthin + 4 oxidized [2Fe-2S]-[ferredoxin] + 2 H2O</text>
        <dbReference type="Rhea" id="RHEA:32443"/>
        <dbReference type="Rhea" id="RHEA-COMP:10000"/>
        <dbReference type="Rhea" id="RHEA-COMP:10001"/>
        <dbReference type="ChEBI" id="CHEBI:15377"/>
        <dbReference type="ChEBI" id="CHEBI:15378"/>
        <dbReference type="ChEBI" id="CHEBI:15379"/>
        <dbReference type="ChEBI" id="CHEBI:27547"/>
        <dbReference type="ChEBI" id="CHEBI:33737"/>
        <dbReference type="ChEBI" id="CHEBI:33738"/>
        <dbReference type="ChEBI" id="CHEBI:35288"/>
        <dbReference type="EC" id="1.14.15.21"/>
    </reaction>
</comment>
<comment type="cofactor">
    <cofactor evidence="4">
        <name>FAD</name>
        <dbReference type="ChEBI" id="CHEBI:57692"/>
    </cofactor>
    <text evidence="4">FAD enhances the epoxidase activity while other flavins such as FMN or riboflavin are without effects.</text>
</comment>
<comment type="activity regulation">
    <text evidence="4">Inhibited by diphenyleneiodonium (DPI).</text>
</comment>
<comment type="pathway">
    <text evidence="2">Plant hormone biosynthesis; abscisate biosynthesis.</text>
</comment>
<comment type="subcellular location">
    <subcellularLocation>
        <location evidence="4">Plastid</location>
        <location evidence="4">Chloroplast thylakoid membrane</location>
    </subcellularLocation>
</comment>
<sequence length="675" mass="73576">MASTVLYNSLTTSTTVFLRSHLPISSSSPNDELHHQSSVISNCNYYLKKSSFGGQRKKLKENNNYVKAAAVAESLKTYPNEVAGDVPEKKLRILVAGGGIGGLVFALAAKKRGFDVKVFEKDLSAIRGEGKYRGPIQVQSNALAALEAIDMDVAEKVLAAGCVTGDRINGLVDGVSGNWYVKFDTFTPAVERGLPVTRVISRMTLQQILAEAVGEEVITNESNVVDFKDDGNKVSVTLDNGKTFEGDLLVGADGIWSKVRTNLFGHSDAVYSGYTCYTGIADYVPADIDSVGYRVFLGNKQYFVSSDVGGGKMQWYAFYKEAPGGVDQPNGMKQRLFDIFEGWCDNVIDVIIATDEEAILRRDIYDRTPKLTWGQGRVTLLGDSVHAMQPNLGQGGCMAIEDSYELALTLDKAWQKSVESGRPIDVASSLKSYEGARRLRVGVIHGLARLAAVMATTYKSYLGIGLGPLSFLTKLRIPHPGRVGGRFFITPAMPLMLRWILGGNSEKLEGRIPYCSLSEKASNNLQRWFEDDDALERALTGEWTLLPQGSVAGSLKPICLSRKEDEPCIIGGVFHKDSSGMSVALSSPQISEKHAQITCKNGAYFVTDLGSEHGTWITDNEGRNYRLPPNFPTRFHPSDVIEFGTDKKAVYRVKVMATPPKASQNSPSAAVLQTA</sequence>
<organism>
    <name type="scientific">Spinacia oleracea</name>
    <name type="common">Spinach</name>
    <dbReference type="NCBI Taxonomy" id="3562"/>
    <lineage>
        <taxon>Eukaryota</taxon>
        <taxon>Viridiplantae</taxon>
        <taxon>Streptophyta</taxon>
        <taxon>Embryophyta</taxon>
        <taxon>Tracheophyta</taxon>
        <taxon>Spermatophyta</taxon>
        <taxon>Magnoliopsida</taxon>
        <taxon>eudicotyledons</taxon>
        <taxon>Gunneridae</taxon>
        <taxon>Pentapetalae</taxon>
        <taxon>Caryophyllales</taxon>
        <taxon>Chenopodiaceae</taxon>
        <taxon>Chenopodioideae</taxon>
        <taxon>Anserineae</taxon>
        <taxon>Spinacia</taxon>
    </lineage>
</organism>
<protein>
    <recommendedName>
        <fullName evidence="2">Zeaxanthin epoxidase, chloroplastic</fullName>
        <ecNumber evidence="4">1.14.15.21</ecNumber>
    </recommendedName>
</protein>
<reference key="1">
    <citation type="journal article" date="2014" name="Nature">
        <title>The genome of the recently domesticated crop plant sugar beet (Beta vulgaris).</title>
        <authorList>
            <person name="Dohm J.C."/>
            <person name="Minoche A.E."/>
            <person name="Holtgraewe D."/>
            <person name="Capella-Gutierrez S."/>
            <person name="Zakrzewski F."/>
            <person name="Tafer H."/>
            <person name="Rupp O."/>
            <person name="Soerensen T.R."/>
            <person name="Stracke R."/>
            <person name="Reinhardt R."/>
            <person name="Goesmann A."/>
            <person name="Kraft T."/>
            <person name="Schulz B."/>
            <person name="Stadler P.F."/>
            <person name="Schmidt T."/>
            <person name="Gabaldon T."/>
            <person name="Lehrach H."/>
            <person name="Weisshaar B."/>
            <person name="Himmelbauer H."/>
        </authorList>
    </citation>
    <scope>NUCLEOTIDE SEQUENCE [LARGE SCALE GENOMIC DNA]</scope>
    <source>
        <strain>cv. Viroflay</strain>
        <tissue>Leaf</tissue>
    </source>
</reference>
<reference key="2">
    <citation type="journal article" date="1995" name="FEBS Lett.">
        <title>FAD is a further essential cofactor of the NAD(P)H and O2-dependent zeaxanthin-epoxidase.</title>
        <authorList>
            <person name="Buech K."/>
            <person name="Stransky H."/>
            <person name="Hager A."/>
        </authorList>
    </citation>
    <scope>FUNCTION</scope>
    <scope>CATALYTIC ACTIVITY</scope>
    <scope>COFACTOR</scope>
    <scope>SUBCELLULAR LOCATION</scope>
    <scope>ACTIVITY REGULATION</scope>
    <source>
        <strain>cv. Butterfly</strain>
    </source>
</reference>
<accession>A0A0K9RDW0</accession>
<dbReference type="EC" id="1.14.15.21" evidence="4"/>
<dbReference type="EMBL" id="KQ143372">
    <property type="protein sequence ID" value="KNA17670.1"/>
    <property type="molecule type" value="Genomic_DNA"/>
</dbReference>
<dbReference type="SMR" id="A0A0K9RDW0"/>
<dbReference type="STRING" id="3562.A0A0K9RDW0"/>
<dbReference type="OrthoDB" id="655030at2759"/>
<dbReference type="SABIO-RK" id="A0A0K9RDW0"/>
<dbReference type="UniPathway" id="UPA00090"/>
<dbReference type="Proteomes" id="UP001155700">
    <property type="component" value="Unplaced"/>
</dbReference>
<dbReference type="GO" id="GO:0009535">
    <property type="term" value="C:chloroplast thylakoid membrane"/>
    <property type="evidence" value="ECO:0007669"/>
    <property type="project" value="UniProtKB-SubCell"/>
</dbReference>
<dbReference type="GO" id="GO:0071949">
    <property type="term" value="F:FAD binding"/>
    <property type="evidence" value="ECO:0007669"/>
    <property type="project" value="InterPro"/>
</dbReference>
<dbReference type="GO" id="GO:0052662">
    <property type="term" value="F:zeaxanthin epoxidase activity"/>
    <property type="evidence" value="ECO:0007669"/>
    <property type="project" value="UniProtKB-EC"/>
</dbReference>
<dbReference type="GO" id="GO:0009688">
    <property type="term" value="P:abscisic acid biosynthetic process"/>
    <property type="evidence" value="ECO:0007669"/>
    <property type="project" value="UniProtKB-UniPathway"/>
</dbReference>
<dbReference type="CDD" id="cd22702">
    <property type="entry name" value="FHA_ZEP-like"/>
    <property type="match status" value="1"/>
</dbReference>
<dbReference type="Gene3D" id="2.60.200.20">
    <property type="match status" value="1"/>
</dbReference>
<dbReference type="Gene3D" id="3.50.50.60">
    <property type="entry name" value="FAD/NAD(P)-binding domain"/>
    <property type="match status" value="1"/>
</dbReference>
<dbReference type="InterPro" id="IPR002938">
    <property type="entry name" value="FAD-bd"/>
</dbReference>
<dbReference type="InterPro" id="IPR036188">
    <property type="entry name" value="FAD/NAD-bd_sf"/>
</dbReference>
<dbReference type="InterPro" id="IPR000253">
    <property type="entry name" value="FHA_dom"/>
</dbReference>
<dbReference type="InterPro" id="IPR008984">
    <property type="entry name" value="SMAD_FHA_dom_sf"/>
</dbReference>
<dbReference type="InterPro" id="IPR017079">
    <property type="entry name" value="Zeaxanthin_epoxidase"/>
</dbReference>
<dbReference type="PANTHER" id="PTHR46496">
    <property type="match status" value="1"/>
</dbReference>
<dbReference type="PANTHER" id="PTHR46496:SF1">
    <property type="entry name" value="ZEAXANTHIN EPOXIDASE, CHLOROPLASTIC"/>
    <property type="match status" value="1"/>
</dbReference>
<dbReference type="Pfam" id="PF01494">
    <property type="entry name" value="FAD_binding_3"/>
    <property type="match status" value="2"/>
</dbReference>
<dbReference type="Pfam" id="PF00498">
    <property type="entry name" value="FHA"/>
    <property type="match status" value="1"/>
</dbReference>
<dbReference type="PIRSF" id="PIRSF036989">
    <property type="entry name" value="Zeaxanthin_epoxidase"/>
    <property type="match status" value="1"/>
</dbReference>
<dbReference type="PRINTS" id="PR00420">
    <property type="entry name" value="RNGMNOXGNASE"/>
</dbReference>
<dbReference type="SMART" id="SM00240">
    <property type="entry name" value="FHA"/>
    <property type="match status" value="1"/>
</dbReference>
<dbReference type="SUPFAM" id="SSF51905">
    <property type="entry name" value="FAD/NAD(P)-binding domain"/>
    <property type="match status" value="1"/>
</dbReference>
<dbReference type="SUPFAM" id="SSF49879">
    <property type="entry name" value="SMAD/FHA domain"/>
    <property type="match status" value="1"/>
</dbReference>
<dbReference type="PROSITE" id="PS50006">
    <property type="entry name" value="FHA_DOMAIN"/>
    <property type="match status" value="1"/>
</dbReference>
<gene>
    <name evidence="5" type="ORF">SOVF_077800</name>
</gene>
<proteinExistence type="evidence at protein level"/>
<evidence type="ECO:0000255" key="1"/>
<evidence type="ECO:0000255" key="2">
    <source>
        <dbReference type="PIRNR" id="PIRNR036989"/>
    </source>
</evidence>
<evidence type="ECO:0000255" key="3">
    <source>
        <dbReference type="PROSITE-ProRule" id="PRU00086"/>
    </source>
</evidence>
<evidence type="ECO:0000269" key="4">
    <source>
    </source>
</evidence>
<evidence type="ECO:0000312" key="5">
    <source>
        <dbReference type="EMBL" id="KNA17670.1"/>
    </source>
</evidence>
<feature type="transit peptide" description="Chloroplast" evidence="1">
    <location>
        <begin position="1"/>
        <end position="25"/>
    </location>
</feature>
<feature type="chain" id="PRO_0000439082" description="Zeaxanthin epoxidase, chloroplastic" evidence="1">
    <location>
        <begin position="26"/>
        <end position="675"/>
    </location>
</feature>
<feature type="domain" description="FHA" evidence="3">
    <location>
        <begin position="558"/>
        <end position="622"/>
    </location>
</feature>
<feature type="binding site" evidence="1">
    <location>
        <begin position="92"/>
        <end position="120"/>
    </location>
    <ligand>
        <name>FAD</name>
        <dbReference type="ChEBI" id="CHEBI:57692"/>
    </ligand>
</feature>
<feature type="binding site" evidence="1">
    <location>
        <begin position="370"/>
        <end position="383"/>
    </location>
    <ligand>
        <name>FAD</name>
        <dbReference type="ChEBI" id="CHEBI:57692"/>
    </ligand>
</feature>